<keyword id="KW-0963">Cytoplasm</keyword>
<keyword id="KW-0217">Developmental protein</keyword>
<keyword id="KW-0221">Differentiation</keyword>
<keyword id="KW-0539">Nucleus</keyword>
<keyword id="KW-0896">Oogenesis</keyword>
<keyword id="KW-1185">Reference proteome</keyword>
<keyword id="KW-0736">Signalosome</keyword>
<evidence type="ECO:0000255" key="1">
    <source>
        <dbReference type="PROSITE-ProRule" id="PRU01185"/>
    </source>
</evidence>
<evidence type="ECO:0000269" key="2">
    <source>
    </source>
</evidence>
<evidence type="ECO:0000269" key="3">
    <source>
    </source>
</evidence>
<evidence type="ECO:0000305" key="4"/>
<accession>Q7KTH8</accession>
<accession>Q0E8L3</accession>
<gene>
    <name type="primary">CSN8</name>
    <name type="ORF">CG13383</name>
</gene>
<comment type="function">
    <text evidence="2 3">Probable component of the COP9 signalosome complex (CSN), a complex involved in various cellular and developmental processes. The CSN complex is an essential regulator of the ubiquitin (Ubl) conjugation pathway by mediating the deneddylation of the cullin subunits of the SCF-type E3 ligase complexes, leading to decrease the Ubl ligase activity of SCF. The CSN complex plays an essential role in oogenesis and embryogenesis and is required for proper photoreceptor R cell differentiation and promote lamina glial cell migration or axon targeting. It also promotes Ubl-dependent degradation of cyclin E (CycE) during early oogenesis.</text>
</comment>
<comment type="subunit">
    <text evidence="3">Essential component of the CSN complex, probably composed of CSN1b, alien/CSN2, CSN3, CSN4, CSN5, CSN6, CSN7 and CSN8.</text>
</comment>
<comment type="subcellular location">
    <subcellularLocation>
        <location evidence="4">Cytoplasm</location>
    </subcellularLocation>
    <subcellularLocation>
        <location evidence="4">Nucleus</location>
    </subcellularLocation>
</comment>
<comment type="developmental stage">
    <text evidence="3">Expressed maternally and zygotically throughout development.</text>
</comment>
<comment type="domain">
    <text>The PCI domain is necessary and sufficient for interactions with other CSN subunits of the complex.</text>
</comment>
<comment type="similarity">
    <text evidence="4">Belongs to the CSN8 family.</text>
</comment>
<reference key="1">
    <citation type="journal article" date="2000" name="Science">
        <title>The genome sequence of Drosophila melanogaster.</title>
        <authorList>
            <person name="Adams M.D."/>
            <person name="Celniker S.E."/>
            <person name="Holt R.A."/>
            <person name="Evans C.A."/>
            <person name="Gocayne J.D."/>
            <person name="Amanatides P.G."/>
            <person name="Scherer S.E."/>
            <person name="Li P.W."/>
            <person name="Hoskins R.A."/>
            <person name="Galle R.F."/>
            <person name="George R.A."/>
            <person name="Lewis S.E."/>
            <person name="Richards S."/>
            <person name="Ashburner M."/>
            <person name="Henderson S.N."/>
            <person name="Sutton G.G."/>
            <person name="Wortman J.R."/>
            <person name="Yandell M.D."/>
            <person name="Zhang Q."/>
            <person name="Chen L.X."/>
            <person name="Brandon R.C."/>
            <person name="Rogers Y.-H.C."/>
            <person name="Blazej R.G."/>
            <person name="Champe M."/>
            <person name="Pfeiffer B.D."/>
            <person name="Wan K.H."/>
            <person name="Doyle C."/>
            <person name="Baxter E.G."/>
            <person name="Helt G."/>
            <person name="Nelson C.R."/>
            <person name="Miklos G.L.G."/>
            <person name="Abril J.F."/>
            <person name="Agbayani A."/>
            <person name="An H.-J."/>
            <person name="Andrews-Pfannkoch C."/>
            <person name="Baldwin D."/>
            <person name="Ballew R.M."/>
            <person name="Basu A."/>
            <person name="Baxendale J."/>
            <person name="Bayraktaroglu L."/>
            <person name="Beasley E.M."/>
            <person name="Beeson K.Y."/>
            <person name="Benos P.V."/>
            <person name="Berman B.P."/>
            <person name="Bhandari D."/>
            <person name="Bolshakov S."/>
            <person name="Borkova D."/>
            <person name="Botchan M.R."/>
            <person name="Bouck J."/>
            <person name="Brokstein P."/>
            <person name="Brottier P."/>
            <person name="Burtis K.C."/>
            <person name="Busam D.A."/>
            <person name="Butler H."/>
            <person name="Cadieu E."/>
            <person name="Center A."/>
            <person name="Chandra I."/>
            <person name="Cherry J.M."/>
            <person name="Cawley S."/>
            <person name="Dahlke C."/>
            <person name="Davenport L.B."/>
            <person name="Davies P."/>
            <person name="de Pablos B."/>
            <person name="Delcher A."/>
            <person name="Deng Z."/>
            <person name="Mays A.D."/>
            <person name="Dew I."/>
            <person name="Dietz S.M."/>
            <person name="Dodson K."/>
            <person name="Doup L.E."/>
            <person name="Downes M."/>
            <person name="Dugan-Rocha S."/>
            <person name="Dunkov B.C."/>
            <person name="Dunn P."/>
            <person name="Durbin K.J."/>
            <person name="Evangelista C.C."/>
            <person name="Ferraz C."/>
            <person name="Ferriera S."/>
            <person name="Fleischmann W."/>
            <person name="Fosler C."/>
            <person name="Gabrielian A.E."/>
            <person name="Garg N.S."/>
            <person name="Gelbart W.M."/>
            <person name="Glasser K."/>
            <person name="Glodek A."/>
            <person name="Gong F."/>
            <person name="Gorrell J.H."/>
            <person name="Gu Z."/>
            <person name="Guan P."/>
            <person name="Harris M."/>
            <person name="Harris N.L."/>
            <person name="Harvey D.A."/>
            <person name="Heiman T.J."/>
            <person name="Hernandez J.R."/>
            <person name="Houck J."/>
            <person name="Hostin D."/>
            <person name="Houston K.A."/>
            <person name="Howland T.J."/>
            <person name="Wei M.-H."/>
            <person name="Ibegwam C."/>
            <person name="Jalali M."/>
            <person name="Kalush F."/>
            <person name="Karpen G.H."/>
            <person name="Ke Z."/>
            <person name="Kennison J.A."/>
            <person name="Ketchum K.A."/>
            <person name="Kimmel B.E."/>
            <person name="Kodira C.D."/>
            <person name="Kraft C.L."/>
            <person name="Kravitz S."/>
            <person name="Kulp D."/>
            <person name="Lai Z."/>
            <person name="Lasko P."/>
            <person name="Lei Y."/>
            <person name="Levitsky A.A."/>
            <person name="Li J.H."/>
            <person name="Li Z."/>
            <person name="Liang Y."/>
            <person name="Lin X."/>
            <person name="Liu X."/>
            <person name="Mattei B."/>
            <person name="McIntosh T.C."/>
            <person name="McLeod M.P."/>
            <person name="McPherson D."/>
            <person name="Merkulov G."/>
            <person name="Milshina N.V."/>
            <person name="Mobarry C."/>
            <person name="Morris J."/>
            <person name="Moshrefi A."/>
            <person name="Mount S.M."/>
            <person name="Moy M."/>
            <person name="Murphy B."/>
            <person name="Murphy L."/>
            <person name="Muzny D.M."/>
            <person name="Nelson D.L."/>
            <person name="Nelson D.R."/>
            <person name="Nelson K.A."/>
            <person name="Nixon K."/>
            <person name="Nusskern D.R."/>
            <person name="Pacleb J.M."/>
            <person name="Palazzolo M."/>
            <person name="Pittman G.S."/>
            <person name="Pan S."/>
            <person name="Pollard J."/>
            <person name="Puri V."/>
            <person name="Reese M.G."/>
            <person name="Reinert K."/>
            <person name="Remington K."/>
            <person name="Saunders R.D.C."/>
            <person name="Scheeler F."/>
            <person name="Shen H."/>
            <person name="Shue B.C."/>
            <person name="Siden-Kiamos I."/>
            <person name="Simpson M."/>
            <person name="Skupski M.P."/>
            <person name="Smith T.J."/>
            <person name="Spier E."/>
            <person name="Spradling A.C."/>
            <person name="Stapleton M."/>
            <person name="Strong R."/>
            <person name="Sun E."/>
            <person name="Svirskas R."/>
            <person name="Tector C."/>
            <person name="Turner R."/>
            <person name="Venter E."/>
            <person name="Wang A.H."/>
            <person name="Wang X."/>
            <person name="Wang Z.-Y."/>
            <person name="Wassarman D.A."/>
            <person name="Weinstock G.M."/>
            <person name="Weissenbach J."/>
            <person name="Williams S.M."/>
            <person name="Woodage T."/>
            <person name="Worley K.C."/>
            <person name="Wu D."/>
            <person name="Yang S."/>
            <person name="Yao Q.A."/>
            <person name="Ye J."/>
            <person name="Yeh R.-F."/>
            <person name="Zaveri J.S."/>
            <person name="Zhan M."/>
            <person name="Zhang G."/>
            <person name="Zhao Q."/>
            <person name="Zheng L."/>
            <person name="Zheng X.H."/>
            <person name="Zhong F.N."/>
            <person name="Zhong W."/>
            <person name="Zhou X."/>
            <person name="Zhu S.C."/>
            <person name="Zhu X."/>
            <person name="Smith H.O."/>
            <person name="Gibbs R.A."/>
            <person name="Myers E.W."/>
            <person name="Rubin G.M."/>
            <person name="Venter J.C."/>
        </authorList>
    </citation>
    <scope>NUCLEOTIDE SEQUENCE [LARGE SCALE GENOMIC DNA]</scope>
    <source>
        <strain>Berkeley</strain>
    </source>
</reference>
<reference key="2">
    <citation type="journal article" date="2002" name="Genome Biol.">
        <title>Annotation of the Drosophila melanogaster euchromatic genome: a systematic review.</title>
        <authorList>
            <person name="Misra S."/>
            <person name="Crosby M.A."/>
            <person name="Mungall C.J."/>
            <person name="Matthews B.B."/>
            <person name="Campbell K.S."/>
            <person name="Hradecky P."/>
            <person name="Huang Y."/>
            <person name="Kaminker J.S."/>
            <person name="Millburn G.H."/>
            <person name="Prochnik S.E."/>
            <person name="Smith C.D."/>
            <person name="Tupy J.L."/>
            <person name="Whitfield E.J."/>
            <person name="Bayraktaroglu L."/>
            <person name="Berman B.P."/>
            <person name="Bettencourt B.R."/>
            <person name="Celniker S.E."/>
            <person name="de Grey A.D.N.J."/>
            <person name="Drysdale R.A."/>
            <person name="Harris N.L."/>
            <person name="Richter J."/>
            <person name="Russo S."/>
            <person name="Schroeder A.J."/>
            <person name="Shu S.Q."/>
            <person name="Stapleton M."/>
            <person name="Yamada C."/>
            <person name="Ashburner M."/>
            <person name="Gelbart W.M."/>
            <person name="Rubin G.M."/>
            <person name="Lewis S.E."/>
        </authorList>
    </citation>
    <scope>GENOME REANNOTATION</scope>
    <source>
        <strain>Berkeley</strain>
    </source>
</reference>
<reference key="3">
    <citation type="submission" date="2004-02" db="EMBL/GenBank/DDBJ databases">
        <authorList>
            <person name="Stapleton M."/>
            <person name="Carlson J.W."/>
            <person name="Chavez C."/>
            <person name="Frise E."/>
            <person name="George R.A."/>
            <person name="Pacleb J.M."/>
            <person name="Park S."/>
            <person name="Wan K.H."/>
            <person name="Yu C."/>
            <person name="Rubin G.M."/>
            <person name="Celniker S.E."/>
        </authorList>
    </citation>
    <scope>NUCLEOTIDE SEQUENCE [LARGE SCALE MRNA]</scope>
    <source>
        <strain>Berkeley</strain>
        <tissue>Embryo</tissue>
    </source>
</reference>
<reference key="4">
    <citation type="journal article" date="1999" name="Curr. Biol.">
        <title>The COP9 signalosome is essential for development of Drosophila melanogaster.</title>
        <authorList>
            <person name="Freilich S."/>
            <person name="Oron E."/>
            <person name="Kapp Y."/>
            <person name="Nevo-Caspi Y."/>
            <person name="Orgad S."/>
            <person name="Segal D."/>
            <person name="Chamovitz D.A."/>
        </authorList>
    </citation>
    <scope>IDENTIFICATION</scope>
</reference>
<reference key="5">
    <citation type="journal article" date="2003" name="Dev. Cell">
        <title>The COP9 signalosome promotes degradation of Cyclin E during early Drosophila oogenesis.</title>
        <authorList>
            <person name="Doronkin S."/>
            <person name="Djagaeva I."/>
            <person name="Beckendorf S.K."/>
        </authorList>
    </citation>
    <scope>FUNCTION OF CSN COMPLEX</scope>
</reference>
<reference key="6">
    <citation type="journal article" date="2008" name="Genes Cells">
        <title>Cop9 signalosome subunit 8 (CSN8) is essential for Drosophila development.</title>
        <authorList>
            <person name="Oren-Giladi P."/>
            <person name="Krieger O."/>
            <person name="Edgar B.A."/>
            <person name="Chamovitz D.A."/>
            <person name="Segal D."/>
        </authorList>
    </citation>
    <scope>FUNCTION</scope>
    <scope>SUBUNIT</scope>
    <scope>DEVELOPMENTAL STAGE</scope>
</reference>
<organism>
    <name type="scientific">Drosophila melanogaster</name>
    <name type="common">Fruit fly</name>
    <dbReference type="NCBI Taxonomy" id="7227"/>
    <lineage>
        <taxon>Eukaryota</taxon>
        <taxon>Metazoa</taxon>
        <taxon>Ecdysozoa</taxon>
        <taxon>Arthropoda</taxon>
        <taxon>Hexapoda</taxon>
        <taxon>Insecta</taxon>
        <taxon>Pterygota</taxon>
        <taxon>Neoptera</taxon>
        <taxon>Endopterygota</taxon>
        <taxon>Diptera</taxon>
        <taxon>Brachycera</taxon>
        <taxon>Muscomorpha</taxon>
        <taxon>Ephydroidea</taxon>
        <taxon>Drosophilidae</taxon>
        <taxon>Drosophila</taxon>
        <taxon>Sophophora</taxon>
    </lineage>
</organism>
<feature type="chain" id="PRO_0000121014" description="COP9 signalosome complex subunit 8">
    <location>
        <begin position="1"/>
        <end position="182"/>
    </location>
</feature>
<feature type="domain" description="PCI" evidence="1">
    <location>
        <begin position="1"/>
        <end position="167"/>
    </location>
</feature>
<protein>
    <recommendedName>
        <fullName>COP9 signalosome complex subunit 8</fullName>
        <shortName>Dch8</shortName>
        <shortName>Signalosome subunit 8</shortName>
    </recommendedName>
</protein>
<dbReference type="EMBL" id="AE014134">
    <property type="protein sequence ID" value="AAN10662.2"/>
    <property type="molecule type" value="Genomic_DNA"/>
</dbReference>
<dbReference type="EMBL" id="BT011518">
    <property type="protein sequence ID" value="AAS15654.1"/>
    <property type="molecule type" value="mRNA"/>
</dbReference>
<dbReference type="RefSeq" id="NP_723378.2">
    <property type="nucleotide sequence ID" value="NM_164809.5"/>
</dbReference>
<dbReference type="SMR" id="Q7KTH8"/>
<dbReference type="BioGRID" id="302275">
    <property type="interactions" value="16"/>
</dbReference>
<dbReference type="ComplexPortal" id="CPX-7964">
    <property type="entry name" value="COP9 signalosome complex, testis-specific variant"/>
</dbReference>
<dbReference type="ComplexPortal" id="CPX-7974">
    <property type="entry name" value="COP9 signalosome complex"/>
</dbReference>
<dbReference type="FunCoup" id="Q7KTH8">
    <property type="interactions" value="1905"/>
</dbReference>
<dbReference type="IntAct" id="Q7KTH8">
    <property type="interactions" value="11"/>
</dbReference>
<dbReference type="STRING" id="7227.FBpp0079262"/>
<dbReference type="PaxDb" id="7227-FBpp0079262"/>
<dbReference type="DNASU" id="49077"/>
<dbReference type="EnsemblMetazoa" id="FBtr0079646">
    <property type="protein sequence ID" value="FBpp0079262"/>
    <property type="gene ID" value="FBgn0261437"/>
</dbReference>
<dbReference type="GeneID" id="49077"/>
<dbReference type="KEGG" id="dme:Dmel_CG42522"/>
<dbReference type="AGR" id="FB:FBgn0261437"/>
<dbReference type="CTD" id="49077"/>
<dbReference type="FlyBase" id="FBgn0261437">
    <property type="gene designation" value="CSN8"/>
</dbReference>
<dbReference type="VEuPathDB" id="VectorBase:FBgn0261437"/>
<dbReference type="eggNOG" id="KOG4414">
    <property type="taxonomic scope" value="Eukaryota"/>
</dbReference>
<dbReference type="HOGENOM" id="CLU_098091_1_1_1"/>
<dbReference type="InParanoid" id="Q7KTH8"/>
<dbReference type="OMA" id="MRIPDKL"/>
<dbReference type="OrthoDB" id="5351233at2759"/>
<dbReference type="PhylomeDB" id="Q7KTH8"/>
<dbReference type="Reactome" id="R-DME-5696394">
    <property type="pathway name" value="DNA Damage Recognition in GG-NER"/>
</dbReference>
<dbReference type="Reactome" id="R-DME-6781823">
    <property type="pathway name" value="Formation of TC-NER Pre-Incision Complex"/>
</dbReference>
<dbReference type="Reactome" id="R-DME-8856825">
    <property type="pathway name" value="Cargo recognition for clathrin-mediated endocytosis"/>
</dbReference>
<dbReference type="Reactome" id="R-DME-8951664">
    <property type="pathway name" value="Neddylation"/>
</dbReference>
<dbReference type="SignaLink" id="Q7KTH8"/>
<dbReference type="BioGRID-ORCS" id="49077">
    <property type="hits" value="0 hits in 1 CRISPR screen"/>
</dbReference>
<dbReference type="GenomeRNAi" id="49077"/>
<dbReference type="PRO" id="PR:Q7KTH8"/>
<dbReference type="Proteomes" id="UP000000803">
    <property type="component" value="Chromosome 2L"/>
</dbReference>
<dbReference type="Bgee" id="FBgn0261437">
    <property type="expression patterns" value="Expressed in secondary oocyte and 99 other cell types or tissues"/>
</dbReference>
<dbReference type="GO" id="GO:0008180">
    <property type="term" value="C:COP9 signalosome"/>
    <property type="evidence" value="ECO:0000314"/>
    <property type="project" value="UniProtKB"/>
</dbReference>
<dbReference type="GO" id="GO:0005737">
    <property type="term" value="C:cytoplasm"/>
    <property type="evidence" value="ECO:0007669"/>
    <property type="project" value="UniProtKB-SubCell"/>
</dbReference>
<dbReference type="GO" id="GO:0001745">
    <property type="term" value="P:compound eye morphogenesis"/>
    <property type="evidence" value="ECO:0000315"/>
    <property type="project" value="FlyBase"/>
</dbReference>
<dbReference type="GO" id="GO:0010387">
    <property type="term" value="P:COP9 signalosome assembly"/>
    <property type="evidence" value="ECO:0000315"/>
    <property type="project" value="FlyBase"/>
</dbReference>
<dbReference type="GO" id="GO:0042742">
    <property type="term" value="P:defense response to bacterium"/>
    <property type="evidence" value="ECO:0000315"/>
    <property type="project" value="FlyBase"/>
</dbReference>
<dbReference type="GO" id="GO:0007476">
    <property type="term" value="P:imaginal disc-derived wing morphogenesis"/>
    <property type="evidence" value="ECO:0000315"/>
    <property type="project" value="FlyBase"/>
</dbReference>
<dbReference type="GO" id="GO:0048477">
    <property type="term" value="P:oogenesis"/>
    <property type="evidence" value="ECO:0000315"/>
    <property type="project" value="UniProtKB"/>
</dbReference>
<dbReference type="GO" id="GO:0042461">
    <property type="term" value="P:photoreceptor cell development"/>
    <property type="evidence" value="ECO:0000315"/>
    <property type="project" value="UniProtKB"/>
</dbReference>
<dbReference type="GO" id="GO:0000338">
    <property type="term" value="P:protein deneddylation"/>
    <property type="evidence" value="ECO:0000315"/>
    <property type="project" value="FlyBase"/>
</dbReference>
<dbReference type="GO" id="GO:0050821">
    <property type="term" value="P:protein stabilization"/>
    <property type="evidence" value="ECO:0000315"/>
    <property type="project" value="FlyBase"/>
</dbReference>
<dbReference type="GO" id="GO:0060625">
    <property type="term" value="P:regulation of protein deneddylation"/>
    <property type="evidence" value="ECO:0000315"/>
    <property type="project" value="UniProtKB"/>
</dbReference>
<dbReference type="Gene3D" id="1.25.40.990">
    <property type="match status" value="1"/>
</dbReference>
<dbReference type="InterPro" id="IPR033205">
    <property type="entry name" value="COP9_CSN8"/>
</dbReference>
<dbReference type="InterPro" id="IPR033464">
    <property type="entry name" value="CSN8_PSD8_EIF3K"/>
</dbReference>
<dbReference type="InterPro" id="IPR000717">
    <property type="entry name" value="PCI_dom"/>
</dbReference>
<dbReference type="PANTHER" id="PTHR13339">
    <property type="entry name" value="COP9 SIGNALOSOME COMPLEX SUBUNIT 8"/>
    <property type="match status" value="1"/>
</dbReference>
<dbReference type="PANTHER" id="PTHR13339:SF0">
    <property type="entry name" value="COP9 SIGNALOSOME COMPLEX SUBUNIT 8"/>
    <property type="match status" value="1"/>
</dbReference>
<dbReference type="Pfam" id="PF10075">
    <property type="entry name" value="CSN8_PSD8_EIF3K"/>
    <property type="match status" value="1"/>
</dbReference>
<dbReference type="PROSITE" id="PS50250">
    <property type="entry name" value="PCI"/>
    <property type="match status" value="1"/>
</dbReference>
<proteinExistence type="evidence at protein level"/>
<sequence>MHLNKYSEVVERLENEEFEQVELGAEVYQQLLAIYLYQNKLADAKLLWMRVPANLRDDKELIQLNLLNIALQNNNYADFFKHIKYEWSERVKSPVEDLLNKQREELFKLMGSAYMSIYQHNLLELSLMSEDELKHACAALNWTEELDGDRVILKPKVQEAPPARGNDDQLLKLTEFVTFLEN</sequence>
<name>CSN8_DROME</name>